<comment type="function">
    <text evidence="1">Catalyzes the condensation of ATP and 5-phosphoribose 1-diphosphate to form N'-(5'-phosphoribosyl)-ATP (PR-ATP). Has a crucial role in the pathway because the rate of histidine biosynthesis seems to be controlled primarily by regulation of HisG enzymatic activity.</text>
</comment>
<comment type="catalytic activity">
    <reaction evidence="1">
        <text>1-(5-phospho-beta-D-ribosyl)-ATP + diphosphate = 5-phospho-alpha-D-ribose 1-diphosphate + ATP</text>
        <dbReference type="Rhea" id="RHEA:18473"/>
        <dbReference type="ChEBI" id="CHEBI:30616"/>
        <dbReference type="ChEBI" id="CHEBI:33019"/>
        <dbReference type="ChEBI" id="CHEBI:58017"/>
        <dbReference type="ChEBI" id="CHEBI:73183"/>
        <dbReference type="EC" id="2.4.2.17"/>
    </reaction>
</comment>
<comment type="pathway">
    <text evidence="1">Amino-acid biosynthesis; L-histidine biosynthesis; L-histidine from 5-phospho-alpha-D-ribose 1-diphosphate: step 1/9.</text>
</comment>
<comment type="subunit">
    <text evidence="1">Heteromultimer composed of HisG and HisZ subunits.</text>
</comment>
<comment type="subcellular location">
    <subcellularLocation>
        <location evidence="1">Cytoplasm</location>
    </subcellularLocation>
</comment>
<comment type="domain">
    <text>Lacks the C-terminal regulatory region which is replaced by HisZ.</text>
</comment>
<comment type="similarity">
    <text evidence="1">Belongs to the ATP phosphoribosyltransferase family. Short subfamily.</text>
</comment>
<name>HIS1_MARN8</name>
<accession>A1U458</accession>
<reference key="1">
    <citation type="journal article" date="2011" name="Appl. Environ. Microbiol.">
        <title>Genomic potential of Marinobacter aquaeolei, a biogeochemical 'opportunitroph'.</title>
        <authorList>
            <person name="Singer E."/>
            <person name="Webb E.A."/>
            <person name="Nelson W.C."/>
            <person name="Heidelberg J.F."/>
            <person name="Ivanova N."/>
            <person name="Pati A."/>
            <person name="Edwards K.J."/>
        </authorList>
    </citation>
    <scope>NUCLEOTIDE SEQUENCE [LARGE SCALE GENOMIC DNA]</scope>
    <source>
        <strain>ATCC 700491 / DSM 11845 / VT8</strain>
    </source>
</reference>
<proteinExistence type="inferred from homology"/>
<gene>
    <name evidence="1" type="primary">hisG</name>
    <name type="ordered locus">Maqu_2702</name>
</gene>
<dbReference type="EC" id="2.4.2.17" evidence="1"/>
<dbReference type="EMBL" id="CP000514">
    <property type="protein sequence ID" value="ABM19777.1"/>
    <property type="molecule type" value="Genomic_DNA"/>
</dbReference>
<dbReference type="RefSeq" id="WP_011786147.1">
    <property type="nucleotide sequence ID" value="NC_008740.1"/>
</dbReference>
<dbReference type="SMR" id="A1U458"/>
<dbReference type="STRING" id="351348.Maqu_2702"/>
<dbReference type="GeneID" id="31821977"/>
<dbReference type="KEGG" id="maq:Maqu_2702"/>
<dbReference type="eggNOG" id="COG0040">
    <property type="taxonomic scope" value="Bacteria"/>
</dbReference>
<dbReference type="HOGENOM" id="CLU_038115_2_0_6"/>
<dbReference type="OrthoDB" id="9801867at2"/>
<dbReference type="UniPathway" id="UPA00031">
    <property type="reaction ID" value="UER00006"/>
</dbReference>
<dbReference type="Proteomes" id="UP000000998">
    <property type="component" value="Chromosome"/>
</dbReference>
<dbReference type="GO" id="GO:0005737">
    <property type="term" value="C:cytoplasm"/>
    <property type="evidence" value="ECO:0007669"/>
    <property type="project" value="UniProtKB-SubCell"/>
</dbReference>
<dbReference type="GO" id="GO:0005524">
    <property type="term" value="F:ATP binding"/>
    <property type="evidence" value="ECO:0007669"/>
    <property type="project" value="UniProtKB-KW"/>
</dbReference>
<dbReference type="GO" id="GO:0003879">
    <property type="term" value="F:ATP phosphoribosyltransferase activity"/>
    <property type="evidence" value="ECO:0007669"/>
    <property type="project" value="UniProtKB-UniRule"/>
</dbReference>
<dbReference type="GO" id="GO:0000105">
    <property type="term" value="P:L-histidine biosynthetic process"/>
    <property type="evidence" value="ECO:0007669"/>
    <property type="project" value="UniProtKB-UniRule"/>
</dbReference>
<dbReference type="CDD" id="cd13595">
    <property type="entry name" value="PBP2_HisGs"/>
    <property type="match status" value="1"/>
</dbReference>
<dbReference type="FunFam" id="3.40.190.10:FF:000011">
    <property type="entry name" value="ATP phosphoribosyltransferase"/>
    <property type="match status" value="1"/>
</dbReference>
<dbReference type="Gene3D" id="3.40.190.10">
    <property type="entry name" value="Periplasmic binding protein-like II"/>
    <property type="match status" value="2"/>
</dbReference>
<dbReference type="HAMAP" id="MF_01018">
    <property type="entry name" value="HisG_Short"/>
    <property type="match status" value="1"/>
</dbReference>
<dbReference type="InterPro" id="IPR013820">
    <property type="entry name" value="ATP_PRibTrfase_cat"/>
</dbReference>
<dbReference type="InterPro" id="IPR018198">
    <property type="entry name" value="ATP_PRibTrfase_CS"/>
</dbReference>
<dbReference type="InterPro" id="IPR001348">
    <property type="entry name" value="ATP_PRibTrfase_HisG"/>
</dbReference>
<dbReference type="InterPro" id="IPR024893">
    <property type="entry name" value="ATP_PRibTrfase_HisG_short"/>
</dbReference>
<dbReference type="NCBIfam" id="TIGR00070">
    <property type="entry name" value="hisG"/>
    <property type="match status" value="1"/>
</dbReference>
<dbReference type="PANTHER" id="PTHR21403:SF8">
    <property type="entry name" value="ATP PHOSPHORIBOSYLTRANSFERASE"/>
    <property type="match status" value="1"/>
</dbReference>
<dbReference type="PANTHER" id="PTHR21403">
    <property type="entry name" value="ATP PHOSPHORIBOSYLTRANSFERASE ATP-PRTASE"/>
    <property type="match status" value="1"/>
</dbReference>
<dbReference type="Pfam" id="PF01634">
    <property type="entry name" value="HisG"/>
    <property type="match status" value="1"/>
</dbReference>
<dbReference type="SUPFAM" id="SSF53850">
    <property type="entry name" value="Periplasmic binding protein-like II"/>
    <property type="match status" value="1"/>
</dbReference>
<dbReference type="PROSITE" id="PS01316">
    <property type="entry name" value="ATP_P_PHORIBOSYLTR"/>
    <property type="match status" value="1"/>
</dbReference>
<feature type="chain" id="PRO_0000319527" description="ATP phosphoribosyltransferase">
    <location>
        <begin position="1"/>
        <end position="214"/>
    </location>
</feature>
<keyword id="KW-0028">Amino-acid biosynthesis</keyword>
<keyword id="KW-0067">ATP-binding</keyword>
<keyword id="KW-0963">Cytoplasm</keyword>
<keyword id="KW-0328">Glycosyltransferase</keyword>
<keyword id="KW-0368">Histidine biosynthesis</keyword>
<keyword id="KW-0547">Nucleotide-binding</keyword>
<keyword id="KW-0808">Transferase</keyword>
<protein>
    <recommendedName>
        <fullName evidence="1">ATP phosphoribosyltransferase</fullName>
        <shortName evidence="1">ATP-PRT</shortName>
        <shortName evidence="1">ATP-PRTase</shortName>
        <ecNumber evidence="1">2.4.2.17</ecNumber>
    </recommendedName>
</protein>
<organism>
    <name type="scientific">Marinobacter nauticus (strain ATCC 700491 / DSM 11845 / VT8)</name>
    <name type="common">Marinobacter aquaeolei</name>
    <dbReference type="NCBI Taxonomy" id="351348"/>
    <lineage>
        <taxon>Bacteria</taxon>
        <taxon>Pseudomonadati</taxon>
        <taxon>Pseudomonadota</taxon>
        <taxon>Gammaproteobacteria</taxon>
        <taxon>Pseudomonadales</taxon>
        <taxon>Marinobacteraceae</taxon>
        <taxon>Marinobacter</taxon>
    </lineage>
</organism>
<sequence length="214" mass="23532">MTDSITIALSKGRILEETLPLLAEAGIELVDDVKKSRKLVFPTTDPNVRILIIRATDVPTYVQYGGADLGVTGKDVLMEHGGDGLYEPLDLNISRCRLMTAGKKGEQPPAGRIRVATKFVNLARRYYAAQGRQADIIKLYGAMELAPILNLADEIVDIVDTGNTLKANGLEPRELIDHISSRLVVNRASMKMKHGQINPIIEKMSAAVERRRDS</sequence>
<evidence type="ECO:0000255" key="1">
    <source>
        <dbReference type="HAMAP-Rule" id="MF_01018"/>
    </source>
</evidence>